<gene>
    <name type="primary">Arfgap2</name>
    <name type="synonym">Zfp289</name>
    <name type="synonym">Znf289</name>
</gene>
<accession>Q3MID3</accession>
<organism>
    <name type="scientific">Rattus norvegicus</name>
    <name type="common">Rat</name>
    <dbReference type="NCBI Taxonomy" id="10116"/>
    <lineage>
        <taxon>Eukaryota</taxon>
        <taxon>Metazoa</taxon>
        <taxon>Chordata</taxon>
        <taxon>Craniata</taxon>
        <taxon>Vertebrata</taxon>
        <taxon>Euteleostomi</taxon>
        <taxon>Mammalia</taxon>
        <taxon>Eutheria</taxon>
        <taxon>Euarchontoglires</taxon>
        <taxon>Glires</taxon>
        <taxon>Rodentia</taxon>
        <taxon>Myomorpha</taxon>
        <taxon>Muroidea</taxon>
        <taxon>Muridae</taxon>
        <taxon>Murinae</taxon>
        <taxon>Rattus</taxon>
    </lineage>
</organism>
<name>ARFG2_RAT</name>
<feature type="initiator methionine" description="Removed" evidence="2">
    <location>
        <position position="1"/>
    </location>
</feature>
<feature type="chain" id="PRO_0000278471" description="ADP-ribosylation factor GTPase-activating protein 2">
    <location>
        <begin position="2"/>
        <end position="520"/>
    </location>
</feature>
<feature type="domain" description="Arf-GAP" evidence="4">
    <location>
        <begin position="11"/>
        <end position="127"/>
    </location>
</feature>
<feature type="zinc finger region" description="C4-type" evidence="4">
    <location>
        <begin position="26"/>
        <end position="49"/>
    </location>
</feature>
<feature type="region of interest" description="Required for interaction with coatomer" evidence="1">
    <location>
        <begin position="97"/>
        <end position="520"/>
    </location>
</feature>
<feature type="region of interest" description="Disordered" evidence="5">
    <location>
        <begin position="163"/>
        <end position="200"/>
    </location>
</feature>
<feature type="coiled-coil region" evidence="3">
    <location>
        <begin position="241"/>
        <end position="307"/>
    </location>
</feature>
<feature type="compositionally biased region" description="Polar residues" evidence="5">
    <location>
        <begin position="168"/>
        <end position="186"/>
    </location>
</feature>
<feature type="modified residue" description="N-acetylalanine" evidence="2">
    <location>
        <position position="2"/>
    </location>
</feature>
<feature type="modified residue" description="Phosphoserine" evidence="2">
    <location>
        <position position="140"/>
    </location>
</feature>
<feature type="modified residue" description="Phosphoserine" evidence="6">
    <location>
        <position position="145"/>
    </location>
</feature>
<feature type="modified residue" description="Phosphoserine" evidence="2">
    <location>
        <position position="200"/>
    </location>
</feature>
<feature type="modified residue" description="Phosphoserine" evidence="6">
    <location>
        <position position="236"/>
    </location>
</feature>
<feature type="modified residue" description="Phosphoserine" evidence="6">
    <location>
        <position position="239"/>
    </location>
</feature>
<feature type="modified residue" description="Phosphoserine" evidence="2">
    <location>
        <position position="311"/>
    </location>
</feature>
<feature type="modified residue" description="Phosphoserine" evidence="2">
    <location>
        <position position="333"/>
    </location>
</feature>
<feature type="modified residue" description="Phosphoserine" evidence="6">
    <location>
        <position position="339"/>
    </location>
</feature>
<feature type="modified residue" description="Phosphoserine" evidence="2">
    <location>
        <position position="363"/>
    </location>
</feature>
<feature type="modified residue" description="Phosphoserine" evidence="6">
    <location>
        <position position="431"/>
    </location>
</feature>
<feature type="modified residue" description="Phosphoserine" evidence="2">
    <location>
        <position position="432"/>
    </location>
</feature>
<feature type="modified residue" description="Phosphoserine" evidence="2">
    <location>
        <position position="512"/>
    </location>
</feature>
<evidence type="ECO:0000250" key="1"/>
<evidence type="ECO:0000250" key="2">
    <source>
        <dbReference type="UniProtKB" id="Q8N6H7"/>
    </source>
</evidence>
<evidence type="ECO:0000255" key="3"/>
<evidence type="ECO:0000255" key="4">
    <source>
        <dbReference type="PROSITE-ProRule" id="PRU00288"/>
    </source>
</evidence>
<evidence type="ECO:0000256" key="5">
    <source>
        <dbReference type="SAM" id="MobiDB-lite"/>
    </source>
</evidence>
<evidence type="ECO:0007744" key="6">
    <source>
    </source>
</evidence>
<proteinExistence type="evidence at protein level"/>
<keyword id="KW-0002">3D-structure</keyword>
<keyword id="KW-0007">Acetylation</keyword>
<keyword id="KW-0175">Coiled coil</keyword>
<keyword id="KW-0963">Cytoplasm</keyword>
<keyword id="KW-0931">ER-Golgi transport</keyword>
<keyword id="KW-0333">Golgi apparatus</keyword>
<keyword id="KW-0343">GTPase activation</keyword>
<keyword id="KW-0472">Membrane</keyword>
<keyword id="KW-0479">Metal-binding</keyword>
<keyword id="KW-0597">Phosphoprotein</keyword>
<keyword id="KW-0653">Protein transport</keyword>
<keyword id="KW-1185">Reference proteome</keyword>
<keyword id="KW-0813">Transport</keyword>
<keyword id="KW-0862">Zinc</keyword>
<keyword id="KW-0863">Zinc-finger</keyword>
<protein>
    <recommendedName>
        <fullName>ADP-ribosylation factor GTPase-activating protein 2</fullName>
        <shortName>ARF GAP 2</shortName>
    </recommendedName>
    <alternativeName>
        <fullName>GTPase-activating protein ZNF289</fullName>
    </alternativeName>
    <alternativeName>
        <fullName>Zinc finger protein 289</fullName>
    </alternativeName>
</protein>
<reference key="1">
    <citation type="journal article" date="2004" name="Genome Res.">
        <title>The status, quality, and expansion of the NIH full-length cDNA project: the Mammalian Gene Collection (MGC).</title>
        <authorList>
            <consortium name="The MGC Project Team"/>
        </authorList>
    </citation>
    <scope>NUCLEOTIDE SEQUENCE [LARGE SCALE MRNA]</scope>
    <source>
        <tissue>Prostate</tissue>
    </source>
</reference>
<reference key="2">
    <citation type="journal article" date="2012" name="Nat. Commun.">
        <title>Quantitative maps of protein phosphorylation sites across 14 different rat organs and tissues.</title>
        <authorList>
            <person name="Lundby A."/>
            <person name="Secher A."/>
            <person name="Lage K."/>
            <person name="Nordsborg N.B."/>
            <person name="Dmytriyev A."/>
            <person name="Lundby C."/>
            <person name="Olsen J.V."/>
        </authorList>
    </citation>
    <scope>PHOSPHORYLATION [LARGE SCALE ANALYSIS] AT SER-145; SER-236; SER-239; SER-339 AND SER-431</scope>
    <scope>IDENTIFICATION BY MASS SPECTROMETRY [LARGE SCALE ANALYSIS]</scope>
</reference>
<comment type="function">
    <text evidence="1">GTPase-activating protein (GAP) for ADP ribosylation factor 1 (ARF1). May regulate coatomer-mediated protein transport from the Golgi complex to the endoplasmic reticulum. Hydrolysis of ARF1-bound GTP may lead to dissociation of coatomer from Golgi-derived membranes to allow fusion with target membranes (By similarity).</text>
</comment>
<comment type="subunit">
    <text evidence="1">Interacts with the coatomer complex. Interacts with the C-terminal appendage domain of COPG1 (By similarity).</text>
</comment>
<comment type="subcellular location">
    <subcellularLocation>
        <location evidence="1">Cytoplasm</location>
    </subcellularLocation>
    <subcellularLocation>
        <location evidence="1">Golgi apparatus membrane</location>
        <topology evidence="1">Peripheral membrane protein</topology>
        <orientation evidence="1">Cytoplasmic side</orientation>
    </subcellularLocation>
    <text evidence="1">Also found on peripheral punctate structures likely to be endoplasmic reticulum-Golgi intermediate compartment.</text>
</comment>
<sequence length="520" mass="56556">MAAGPSKSEIQTLFKRLRAIPTNKACFDCGAKSPSWASITYGVFLCIDCSGVHRSLGVHLSFIRSTELDSNWSWLQLRCMQVGGNANATAFFRQHGCLANDANTKYNSRAAQMYREKIRQLGSTALARHGTDLWIDNMNSAPSHSPEKKDSDFFTEHTQAPAWDTAATDPSGTQQPALPSESSSLAQPEPGPNTDLLGTSPQASLELKSSIIGKKKPAAAKKGLGAKKGLGAQKVSNQSFTEIERQAQVAEKLREQQAADAKKQAEESMVASMRLAYQELQIDRKKEEKKLQNLEGKKREQAERLGMGLVSRSSISHSVLSEMQMIEQETPLSAKSSRSQLDLFDDVGTFASGPPKYKDNPFSLGETFGSRWDSDAAWGMDRVEEKEPEVTISSIRPISERTTSRREVESRISGLESSEARQKFAGAKAISSDMFFGREVDSEYEARSRLQQLSGSSAISSSDLFGDVDGAHGGGTVSLGNVLPTADIAQFKQGVKSVAGKMAVLANGVMNSLQDRYGSY</sequence>
<dbReference type="EMBL" id="BC101917">
    <property type="protein sequence ID" value="AAI01918.1"/>
    <property type="molecule type" value="mRNA"/>
</dbReference>
<dbReference type="RefSeq" id="NP_001028879.1">
    <property type="nucleotide sequence ID" value="NM_001033707.1"/>
</dbReference>
<dbReference type="PDB" id="5NZS">
    <property type="method" value="EM"/>
    <property type="resolution" value="10.10 A"/>
    <property type="chains" value="P=1-520"/>
</dbReference>
<dbReference type="PDBsum" id="5NZS"/>
<dbReference type="EMDB" id="EMD-3721"/>
<dbReference type="SMR" id="Q3MID3"/>
<dbReference type="FunCoup" id="Q3MID3">
    <property type="interactions" value="4126"/>
</dbReference>
<dbReference type="IntAct" id="Q3MID3">
    <property type="interactions" value="1"/>
</dbReference>
<dbReference type="STRING" id="10116.ENSRNOP00000053988"/>
<dbReference type="iPTMnet" id="Q3MID3"/>
<dbReference type="PhosphoSitePlus" id="Q3MID3"/>
<dbReference type="jPOST" id="Q3MID3"/>
<dbReference type="PaxDb" id="10116-ENSRNOP00000053988"/>
<dbReference type="Ensembl" id="ENSRNOT00000057161.3">
    <property type="protein sequence ID" value="ENSRNOP00000053988.2"/>
    <property type="gene ID" value="ENSRNOG00000014429.6"/>
</dbReference>
<dbReference type="GeneID" id="362162"/>
<dbReference type="KEGG" id="rno:362162"/>
<dbReference type="UCSC" id="RGD:1306177">
    <property type="organism name" value="rat"/>
</dbReference>
<dbReference type="AGR" id="RGD:1306177"/>
<dbReference type="CTD" id="84364"/>
<dbReference type="RGD" id="1306177">
    <property type="gene designation" value="Arfgap2"/>
</dbReference>
<dbReference type="eggNOG" id="KOG0706">
    <property type="taxonomic scope" value="Eukaryota"/>
</dbReference>
<dbReference type="GeneTree" id="ENSGT00940000155568"/>
<dbReference type="HOGENOM" id="CLU_023062_6_2_1"/>
<dbReference type="InParanoid" id="Q3MID3"/>
<dbReference type="Reactome" id="R-RNO-6807878">
    <property type="pathway name" value="COPI-mediated anterograde transport"/>
</dbReference>
<dbReference type="Reactome" id="R-RNO-6811434">
    <property type="pathway name" value="COPI-dependent Golgi-to-ER retrograde traffic"/>
</dbReference>
<dbReference type="PRO" id="PR:Q3MID3"/>
<dbReference type="Proteomes" id="UP000002494">
    <property type="component" value="Chromosome 3"/>
</dbReference>
<dbReference type="Bgee" id="ENSRNOG00000014429">
    <property type="expression patterns" value="Expressed in skeletal muscle tissue and 19 other cell types or tissues"/>
</dbReference>
<dbReference type="GO" id="GO:0000139">
    <property type="term" value="C:Golgi membrane"/>
    <property type="evidence" value="ECO:0007669"/>
    <property type="project" value="UniProtKB-SubCell"/>
</dbReference>
<dbReference type="GO" id="GO:0005096">
    <property type="term" value="F:GTPase activator activity"/>
    <property type="evidence" value="ECO:0000318"/>
    <property type="project" value="GO_Central"/>
</dbReference>
<dbReference type="GO" id="GO:0008270">
    <property type="term" value="F:zinc ion binding"/>
    <property type="evidence" value="ECO:0007669"/>
    <property type="project" value="UniProtKB-KW"/>
</dbReference>
<dbReference type="GO" id="GO:0048205">
    <property type="term" value="P:COPI coating of Golgi vesicle"/>
    <property type="evidence" value="ECO:0000318"/>
    <property type="project" value="GO_Central"/>
</dbReference>
<dbReference type="GO" id="GO:0015031">
    <property type="term" value="P:protein transport"/>
    <property type="evidence" value="ECO:0007669"/>
    <property type="project" value="UniProtKB-KW"/>
</dbReference>
<dbReference type="CDD" id="cd09029">
    <property type="entry name" value="ArfGap_ArfGap2"/>
    <property type="match status" value="1"/>
</dbReference>
<dbReference type="FunFam" id="1.10.220.150:FF:000004">
    <property type="entry name" value="Putative ADP-ribosylation factor GTPase-activating protein 2"/>
    <property type="match status" value="1"/>
</dbReference>
<dbReference type="Gene3D" id="1.10.220.150">
    <property type="entry name" value="Arf GTPase activating protein"/>
    <property type="match status" value="1"/>
</dbReference>
<dbReference type="InterPro" id="IPR037278">
    <property type="entry name" value="ARFGAP/RecO"/>
</dbReference>
<dbReference type="InterPro" id="IPR001164">
    <property type="entry name" value="ArfGAP_dom"/>
</dbReference>
<dbReference type="InterPro" id="IPR038508">
    <property type="entry name" value="ArfGAP_dom_sf"/>
</dbReference>
<dbReference type="PANTHER" id="PTHR45686">
    <property type="entry name" value="ADP-RIBOSYLATION FACTOR GTPASE ACTIVATING PROTEIN 3, ISOFORM H-RELATED"/>
    <property type="match status" value="1"/>
</dbReference>
<dbReference type="PANTHER" id="PTHR45686:SF10">
    <property type="entry name" value="ADP-RIBOSYLATION FACTOR GTPASE-ACTIVATING PROTEIN 2"/>
    <property type="match status" value="1"/>
</dbReference>
<dbReference type="Pfam" id="PF01412">
    <property type="entry name" value="ArfGap"/>
    <property type="match status" value="1"/>
</dbReference>
<dbReference type="PRINTS" id="PR00405">
    <property type="entry name" value="REVINTRACTNG"/>
</dbReference>
<dbReference type="SMART" id="SM00105">
    <property type="entry name" value="ArfGap"/>
    <property type="match status" value="1"/>
</dbReference>
<dbReference type="SUPFAM" id="SSF57863">
    <property type="entry name" value="ArfGap/RecO-like zinc finger"/>
    <property type="match status" value="1"/>
</dbReference>
<dbReference type="PROSITE" id="PS50115">
    <property type="entry name" value="ARFGAP"/>
    <property type="match status" value="1"/>
</dbReference>